<reference key="1">
    <citation type="journal article" date="2002" name="Nature">
        <title>The genome sequence of Schizosaccharomyces pombe.</title>
        <authorList>
            <person name="Wood V."/>
            <person name="Gwilliam R."/>
            <person name="Rajandream M.A."/>
            <person name="Lyne M.H."/>
            <person name="Lyne R."/>
            <person name="Stewart A."/>
            <person name="Sgouros J.G."/>
            <person name="Peat N."/>
            <person name="Hayles J."/>
            <person name="Baker S.G."/>
            <person name="Basham D."/>
            <person name="Bowman S."/>
            <person name="Brooks K."/>
            <person name="Brown D."/>
            <person name="Brown S."/>
            <person name="Chillingworth T."/>
            <person name="Churcher C.M."/>
            <person name="Collins M."/>
            <person name="Connor R."/>
            <person name="Cronin A."/>
            <person name="Davis P."/>
            <person name="Feltwell T."/>
            <person name="Fraser A."/>
            <person name="Gentles S."/>
            <person name="Goble A."/>
            <person name="Hamlin N."/>
            <person name="Harris D.E."/>
            <person name="Hidalgo J."/>
            <person name="Hodgson G."/>
            <person name="Holroyd S."/>
            <person name="Hornsby T."/>
            <person name="Howarth S."/>
            <person name="Huckle E.J."/>
            <person name="Hunt S."/>
            <person name="Jagels K."/>
            <person name="James K.D."/>
            <person name="Jones L."/>
            <person name="Jones M."/>
            <person name="Leather S."/>
            <person name="McDonald S."/>
            <person name="McLean J."/>
            <person name="Mooney P."/>
            <person name="Moule S."/>
            <person name="Mungall K.L."/>
            <person name="Murphy L.D."/>
            <person name="Niblett D."/>
            <person name="Odell C."/>
            <person name="Oliver K."/>
            <person name="O'Neil S."/>
            <person name="Pearson D."/>
            <person name="Quail M.A."/>
            <person name="Rabbinowitsch E."/>
            <person name="Rutherford K.M."/>
            <person name="Rutter S."/>
            <person name="Saunders D."/>
            <person name="Seeger K."/>
            <person name="Sharp S."/>
            <person name="Skelton J."/>
            <person name="Simmonds M.N."/>
            <person name="Squares R."/>
            <person name="Squares S."/>
            <person name="Stevens K."/>
            <person name="Taylor K."/>
            <person name="Taylor R.G."/>
            <person name="Tivey A."/>
            <person name="Walsh S.V."/>
            <person name="Warren T."/>
            <person name="Whitehead S."/>
            <person name="Woodward J.R."/>
            <person name="Volckaert G."/>
            <person name="Aert R."/>
            <person name="Robben J."/>
            <person name="Grymonprez B."/>
            <person name="Weltjens I."/>
            <person name="Vanstreels E."/>
            <person name="Rieger M."/>
            <person name="Schaefer M."/>
            <person name="Mueller-Auer S."/>
            <person name="Gabel C."/>
            <person name="Fuchs M."/>
            <person name="Duesterhoeft A."/>
            <person name="Fritzc C."/>
            <person name="Holzer E."/>
            <person name="Moestl D."/>
            <person name="Hilbert H."/>
            <person name="Borzym K."/>
            <person name="Langer I."/>
            <person name="Beck A."/>
            <person name="Lehrach H."/>
            <person name="Reinhardt R."/>
            <person name="Pohl T.M."/>
            <person name="Eger P."/>
            <person name="Zimmermann W."/>
            <person name="Wedler H."/>
            <person name="Wambutt R."/>
            <person name="Purnelle B."/>
            <person name="Goffeau A."/>
            <person name="Cadieu E."/>
            <person name="Dreano S."/>
            <person name="Gloux S."/>
            <person name="Lelaure V."/>
            <person name="Mottier S."/>
            <person name="Galibert F."/>
            <person name="Aves S.J."/>
            <person name="Xiang Z."/>
            <person name="Hunt C."/>
            <person name="Moore K."/>
            <person name="Hurst S.M."/>
            <person name="Lucas M."/>
            <person name="Rochet M."/>
            <person name="Gaillardin C."/>
            <person name="Tallada V.A."/>
            <person name="Garzon A."/>
            <person name="Thode G."/>
            <person name="Daga R.R."/>
            <person name="Cruzado L."/>
            <person name="Jimenez J."/>
            <person name="Sanchez M."/>
            <person name="del Rey F."/>
            <person name="Benito J."/>
            <person name="Dominguez A."/>
            <person name="Revuelta J.L."/>
            <person name="Moreno S."/>
            <person name="Armstrong J."/>
            <person name="Forsburg S.L."/>
            <person name="Cerutti L."/>
            <person name="Lowe T."/>
            <person name="McCombie W.R."/>
            <person name="Paulsen I."/>
            <person name="Potashkin J."/>
            <person name="Shpakovski G.V."/>
            <person name="Ussery D."/>
            <person name="Barrell B.G."/>
            <person name="Nurse P."/>
        </authorList>
    </citation>
    <scope>NUCLEOTIDE SEQUENCE [LARGE SCALE GENOMIC DNA]</scope>
    <source>
        <strain>972 / ATCC 24843</strain>
    </source>
</reference>
<reference key="2">
    <citation type="journal article" date="2006" name="Nat. Biotechnol.">
        <title>ORFeome cloning and global analysis of protein localization in the fission yeast Schizosaccharomyces pombe.</title>
        <authorList>
            <person name="Matsuyama A."/>
            <person name="Arai R."/>
            <person name="Yashiroda Y."/>
            <person name="Shirai A."/>
            <person name="Kamata A."/>
            <person name="Sekido S."/>
            <person name="Kobayashi Y."/>
            <person name="Hashimoto A."/>
            <person name="Hamamoto M."/>
            <person name="Hiraoka Y."/>
            <person name="Horinouchi S."/>
            <person name="Yoshida M."/>
        </authorList>
    </citation>
    <scope>SUBCELLULAR LOCATION [LARGE SCALE ANALYSIS]</scope>
</reference>
<reference key="3">
    <citation type="journal article" date="2008" name="J. Proteome Res.">
        <title>Phosphoproteome analysis of fission yeast.</title>
        <authorList>
            <person name="Wilson-Grady J.T."/>
            <person name="Villen J."/>
            <person name="Gygi S.P."/>
        </authorList>
    </citation>
    <scope>PHOSPHORYLATION [LARGE SCALE ANALYSIS] AT SER-85 AND SER-128</scope>
    <scope>IDENTIFICATION BY MASS SPECTROMETRY</scope>
</reference>
<evidence type="ECO:0000250" key="1">
    <source>
        <dbReference type="UniProtKB" id="P0CX43"/>
    </source>
</evidence>
<evidence type="ECO:0000269" key="2">
    <source>
    </source>
</evidence>
<evidence type="ECO:0000269" key="3">
    <source>
    </source>
</evidence>
<evidence type="ECO:0000305" key="4"/>
<proteinExistence type="evidence at protein level"/>
<sequence>MSKVSPANIRSSVETILKGSEEKKRNFTETVELQIGLKNYDPQRDKRFSGTIKLPNVPRPNMSICILGDAHDLDRAKHGGVDAMSVDDLKKLNKNKKLVKKLAKKYDAFIASEVLIKQIPRLLGPGLSKAGKFPSPVSHSDDLYGKIIEVKSTIKFQLKKVLCLGVAVGHVDMAEEQLAANLSLAINFLVSLLKKGWQNIGSLVIKSTMGKPYRLY</sequence>
<protein>
    <recommendedName>
        <fullName evidence="4">Large ribosomal subunit protein uL1A</fullName>
    </recommendedName>
    <alternativeName>
        <fullName>60S ribosomal protein L1-A</fullName>
    </alternativeName>
    <alternativeName>
        <fullName>L10a</fullName>
    </alternativeName>
</protein>
<dbReference type="EMBL" id="CU329671">
    <property type="protein sequence ID" value="CAB10813.1"/>
    <property type="molecule type" value="Genomic_DNA"/>
</dbReference>
<dbReference type="PIR" id="T40178">
    <property type="entry name" value="T40178"/>
</dbReference>
<dbReference type="RefSeq" id="NP_596267.1">
    <property type="nucleotide sequence ID" value="NM_001022188.2"/>
</dbReference>
<dbReference type="SMR" id="O14363"/>
<dbReference type="BioGRID" id="276907">
    <property type="interactions" value="11"/>
</dbReference>
<dbReference type="FunCoup" id="O14363">
    <property type="interactions" value="446"/>
</dbReference>
<dbReference type="STRING" id="284812.O14363"/>
<dbReference type="iPTMnet" id="O14363"/>
<dbReference type="PaxDb" id="4896-SPBC30D10.18c.1"/>
<dbReference type="EnsemblFungi" id="SPBC30D10.18c.1">
    <property type="protein sequence ID" value="SPBC30D10.18c.1:pep"/>
    <property type="gene ID" value="SPBC30D10.18c"/>
</dbReference>
<dbReference type="GeneID" id="2540378"/>
<dbReference type="KEGG" id="spo:2540378"/>
<dbReference type="PomBase" id="SPBC30D10.18c">
    <property type="gene designation" value="rpl102"/>
</dbReference>
<dbReference type="VEuPathDB" id="FungiDB:SPBC30D10.18c"/>
<dbReference type="eggNOG" id="KOG1570">
    <property type="taxonomic scope" value="Eukaryota"/>
</dbReference>
<dbReference type="HOGENOM" id="CLU_062853_3_0_1"/>
<dbReference type="InParanoid" id="O14363"/>
<dbReference type="OMA" id="GPRNKMP"/>
<dbReference type="PhylomeDB" id="O14363"/>
<dbReference type="PRO" id="PR:O14363"/>
<dbReference type="Proteomes" id="UP000002485">
    <property type="component" value="Chromosome II"/>
</dbReference>
<dbReference type="GO" id="GO:0005829">
    <property type="term" value="C:cytosol"/>
    <property type="evidence" value="ECO:0007005"/>
    <property type="project" value="PomBase"/>
</dbReference>
<dbReference type="GO" id="GO:0022625">
    <property type="term" value="C:cytosolic large ribosomal subunit"/>
    <property type="evidence" value="ECO:0000318"/>
    <property type="project" value="GO_Central"/>
</dbReference>
<dbReference type="GO" id="GO:0003723">
    <property type="term" value="F:RNA binding"/>
    <property type="evidence" value="ECO:0000318"/>
    <property type="project" value="GO_Central"/>
</dbReference>
<dbReference type="GO" id="GO:0003735">
    <property type="term" value="F:structural constituent of ribosome"/>
    <property type="evidence" value="ECO:0000266"/>
    <property type="project" value="PomBase"/>
</dbReference>
<dbReference type="GO" id="GO:0002181">
    <property type="term" value="P:cytoplasmic translation"/>
    <property type="evidence" value="ECO:0000266"/>
    <property type="project" value="PomBase"/>
</dbReference>
<dbReference type="CDD" id="cd00403">
    <property type="entry name" value="Ribosomal_L1"/>
    <property type="match status" value="1"/>
</dbReference>
<dbReference type="FunFam" id="3.30.190.20:FF:000006">
    <property type="entry name" value="Ribosomal protein"/>
    <property type="match status" value="1"/>
</dbReference>
<dbReference type="FunFam" id="3.40.50.790:FF:000002">
    <property type="entry name" value="Ribosomal protein"/>
    <property type="match status" value="1"/>
</dbReference>
<dbReference type="FunFam" id="3.30.190.20:FF:000009">
    <property type="entry name" value="Ribosomal protein L10a"/>
    <property type="match status" value="1"/>
</dbReference>
<dbReference type="Gene3D" id="3.30.190.20">
    <property type="match status" value="1"/>
</dbReference>
<dbReference type="Gene3D" id="3.40.50.790">
    <property type="match status" value="1"/>
</dbReference>
<dbReference type="InterPro" id="IPR050257">
    <property type="entry name" value="eL8/uL1-like"/>
</dbReference>
<dbReference type="InterPro" id="IPR002143">
    <property type="entry name" value="Ribosomal_uL1"/>
</dbReference>
<dbReference type="InterPro" id="IPR023674">
    <property type="entry name" value="Ribosomal_uL1-like"/>
</dbReference>
<dbReference type="InterPro" id="IPR028364">
    <property type="entry name" value="Ribosomal_uL1/biogenesis"/>
</dbReference>
<dbReference type="InterPro" id="IPR016095">
    <property type="entry name" value="Ribosomal_uL1_3-a/b-sand"/>
</dbReference>
<dbReference type="InterPro" id="IPR023673">
    <property type="entry name" value="Ribosomal_uL1_CS"/>
</dbReference>
<dbReference type="PANTHER" id="PTHR23105">
    <property type="entry name" value="RIBOSOMAL PROTEIN L7AE FAMILY MEMBER"/>
    <property type="match status" value="1"/>
</dbReference>
<dbReference type="Pfam" id="PF00687">
    <property type="entry name" value="Ribosomal_L1"/>
    <property type="match status" value="1"/>
</dbReference>
<dbReference type="PIRSF" id="PIRSF002155">
    <property type="entry name" value="Ribosomal_L1"/>
    <property type="match status" value="1"/>
</dbReference>
<dbReference type="SUPFAM" id="SSF56808">
    <property type="entry name" value="Ribosomal protein L1"/>
    <property type="match status" value="1"/>
</dbReference>
<dbReference type="PROSITE" id="PS01199">
    <property type="entry name" value="RIBOSOMAL_L1"/>
    <property type="match status" value="1"/>
</dbReference>
<feature type="chain" id="PRO_0000125840" description="Large ribosomal subunit protein uL1A">
    <location>
        <begin position="1"/>
        <end position="216"/>
    </location>
</feature>
<feature type="modified residue" description="Phosphoserine" evidence="3">
    <location>
        <position position="85"/>
    </location>
</feature>
<feature type="modified residue" description="Phosphoserine" evidence="3">
    <location>
        <position position="128"/>
    </location>
</feature>
<keyword id="KW-0963">Cytoplasm</keyword>
<keyword id="KW-0597">Phosphoprotein</keyword>
<keyword id="KW-1185">Reference proteome</keyword>
<keyword id="KW-0687">Ribonucleoprotein</keyword>
<keyword id="KW-0689">Ribosomal protein</keyword>
<gene>
    <name type="primary">rpl102</name>
    <name type="synonym">rpl1a</name>
    <name type="ORF">SPBC30D10.18c</name>
</gene>
<accession>O14363</accession>
<comment type="function">
    <text evidence="1">Component of the ribosome, a large ribonucleoprotein complex responsible for the synthesis of proteins in the cell. The small ribosomal subunit (SSU) binds messenger RNAs (mRNAs) and translates the encoded message by selecting cognate aminoacyl-transfer RNA (tRNA) molecules. The large subunit (LSU) contains the ribosomal catalytic site termed the peptidyl transferase center (PTC), which catalyzes the formation of peptide bonds, thereby polymerizing the amino acids delivered by tRNAs into a polypeptide chain. The nascent polypeptides leave the ribosome through a tunnel in the LSU and interact with protein factors that function in enzymatic processing, targeting, and the membrane insertion of nascent chains at the exit of the ribosomal tunnel. uL1 forms part of the L1 stalk, a mobile element that plays a role in evacuating the exit-site tRNA.</text>
</comment>
<comment type="subunit">
    <text evidence="1">Component of the large ribosomal subunit (LSU). Mature yeast ribosomes consist of a small (40S) and a large (60S) subunit. The 40S small subunit contains 1 molecule of ribosomal RNA (18S rRNA) and at least 33 different proteins. The large 60S subunit contains 3 rRNA molecules (25S, 5.8S and 5S rRNA) and at least 46 different proteins. uL1 forms part of the L1 stalk.</text>
</comment>
<comment type="subcellular location">
    <subcellularLocation>
        <location evidence="2">Cytoplasm</location>
    </subcellularLocation>
</comment>
<comment type="miscellaneous">
    <text>There are 2 genes for uL1 in S.pombe.</text>
</comment>
<comment type="similarity">
    <text evidence="4">Belongs to the universal ribosomal protein uL1 family.</text>
</comment>
<organism>
    <name type="scientific">Schizosaccharomyces pombe (strain 972 / ATCC 24843)</name>
    <name type="common">Fission yeast</name>
    <dbReference type="NCBI Taxonomy" id="284812"/>
    <lineage>
        <taxon>Eukaryota</taxon>
        <taxon>Fungi</taxon>
        <taxon>Dikarya</taxon>
        <taxon>Ascomycota</taxon>
        <taxon>Taphrinomycotina</taxon>
        <taxon>Schizosaccharomycetes</taxon>
        <taxon>Schizosaccharomycetales</taxon>
        <taxon>Schizosaccharomycetaceae</taxon>
        <taxon>Schizosaccharomyces</taxon>
    </lineage>
</organism>
<name>RL1A_SCHPO</name>